<keyword id="KW-0030">Aminoacyl-tRNA synthetase</keyword>
<keyword id="KW-0067">ATP-binding</keyword>
<keyword id="KW-0963">Cytoplasm</keyword>
<keyword id="KW-0436">Ligase</keyword>
<keyword id="KW-0547">Nucleotide-binding</keyword>
<keyword id="KW-0648">Protein biosynthesis</keyword>
<keyword id="KW-1185">Reference proteome</keyword>
<name>SYN_OLEA2</name>
<proteinExistence type="inferred from homology"/>
<evidence type="ECO:0000255" key="1">
    <source>
        <dbReference type="HAMAP-Rule" id="MF_00534"/>
    </source>
</evidence>
<reference key="1">
    <citation type="journal article" date="2011" name="J. Bacteriol.">
        <title>Complete genome sequence and updated annotation of Desulfovibrio alaskensis G20.</title>
        <authorList>
            <person name="Hauser L.J."/>
            <person name="Land M.L."/>
            <person name="Brown S.D."/>
            <person name="Larimer F."/>
            <person name="Keller K.L."/>
            <person name="Rapp-Giles B.J."/>
            <person name="Price M.N."/>
            <person name="Lin M."/>
            <person name="Bruce D.C."/>
            <person name="Detter J.C."/>
            <person name="Tapia R."/>
            <person name="Han C.S."/>
            <person name="Goodwin L.A."/>
            <person name="Cheng J.F."/>
            <person name="Pitluck S."/>
            <person name="Copeland A."/>
            <person name="Lucas S."/>
            <person name="Nolan M."/>
            <person name="Lapidus A.L."/>
            <person name="Palumbo A.V."/>
            <person name="Wall J.D."/>
        </authorList>
    </citation>
    <scope>NUCLEOTIDE SEQUENCE [LARGE SCALE GENOMIC DNA]</scope>
    <source>
        <strain>ATCC BAA-1058 / DSM 17464 / G20</strain>
    </source>
</reference>
<feature type="chain" id="PRO_1000051389" description="Asparagine--tRNA ligase">
    <location>
        <begin position="1"/>
        <end position="461"/>
    </location>
</feature>
<protein>
    <recommendedName>
        <fullName evidence="1">Asparagine--tRNA ligase</fullName>
        <ecNumber evidence="1">6.1.1.22</ecNumber>
    </recommendedName>
    <alternativeName>
        <fullName evidence="1">Asparaginyl-tRNA synthetase</fullName>
        <shortName evidence="1">AsnRS</shortName>
    </alternativeName>
</protein>
<accession>Q317J6</accession>
<organism>
    <name type="scientific">Oleidesulfovibrio alaskensis (strain ATCC BAA-1058 / DSM 17464 / G20)</name>
    <name type="common">Desulfovibrio alaskensis</name>
    <dbReference type="NCBI Taxonomy" id="207559"/>
    <lineage>
        <taxon>Bacteria</taxon>
        <taxon>Pseudomonadati</taxon>
        <taxon>Thermodesulfobacteriota</taxon>
        <taxon>Desulfovibrionia</taxon>
        <taxon>Desulfovibrionales</taxon>
        <taxon>Desulfovibrionaceae</taxon>
        <taxon>Oleidesulfovibrio</taxon>
    </lineage>
</organism>
<sequence length="461" mass="51878">MKRTQILDALNASAPCDDIRICGWVRTRRDAKGFSFLELNDGSCLTNIQVIVDEETDAYRSVGEATTGASVDIRGQLVESPGKGQKWEVRAATMTLLGKADPETFPLQKKRHSDEYLRTIAHLRPRTNKFGAAFRIRAEASYAVHSFFRENGFFNVHTPILTGSDCEGAGEMFRVTTLPAVGASAPAEGSVFDGDFFGKECSLTVSGQLEAEIMAQSLGKVYTFGPTFRAENSNTPRHAAEFWMVEPEMAFADLEDDMQLAEDMVKYVISHVMKHCAADLDLFCKFVDKELSARLENILAHPFARVSYTEAIEILKASGRKFEYPAEWGADLQTEHERYLAEEHFKKPVAVYDYPKEIKAFYMRLNDDGKTVAAMDLLVPRIGELVGGSQREERLDVLEARIKELGQNPDDYWWYLELRKFGTAPHAGFGMGFERLLMLLTGIGNIRDVIPFPRTPRHLEF</sequence>
<comment type="catalytic activity">
    <reaction evidence="1">
        <text>tRNA(Asn) + L-asparagine + ATP = L-asparaginyl-tRNA(Asn) + AMP + diphosphate + H(+)</text>
        <dbReference type="Rhea" id="RHEA:11180"/>
        <dbReference type="Rhea" id="RHEA-COMP:9659"/>
        <dbReference type="Rhea" id="RHEA-COMP:9674"/>
        <dbReference type="ChEBI" id="CHEBI:15378"/>
        <dbReference type="ChEBI" id="CHEBI:30616"/>
        <dbReference type="ChEBI" id="CHEBI:33019"/>
        <dbReference type="ChEBI" id="CHEBI:58048"/>
        <dbReference type="ChEBI" id="CHEBI:78442"/>
        <dbReference type="ChEBI" id="CHEBI:78515"/>
        <dbReference type="ChEBI" id="CHEBI:456215"/>
        <dbReference type="EC" id="6.1.1.22"/>
    </reaction>
</comment>
<comment type="subunit">
    <text evidence="1">Homodimer.</text>
</comment>
<comment type="subcellular location">
    <subcellularLocation>
        <location evidence="1">Cytoplasm</location>
    </subcellularLocation>
</comment>
<comment type="similarity">
    <text evidence="1">Belongs to the class-II aminoacyl-tRNA synthetase family.</text>
</comment>
<gene>
    <name evidence="1" type="primary">asnS</name>
    <name type="ordered locus">Dde_0099</name>
</gene>
<dbReference type="EC" id="6.1.1.22" evidence="1"/>
<dbReference type="EMBL" id="CP000112">
    <property type="protein sequence ID" value="ABB36900.1"/>
    <property type="molecule type" value="Genomic_DNA"/>
</dbReference>
<dbReference type="RefSeq" id="WP_011366279.1">
    <property type="nucleotide sequence ID" value="NC_007519.1"/>
</dbReference>
<dbReference type="SMR" id="Q317J6"/>
<dbReference type="STRING" id="207559.Dde_0099"/>
<dbReference type="KEGG" id="dde:Dde_0099"/>
<dbReference type="eggNOG" id="COG0017">
    <property type="taxonomic scope" value="Bacteria"/>
</dbReference>
<dbReference type="HOGENOM" id="CLU_004553_2_0_7"/>
<dbReference type="Proteomes" id="UP000002710">
    <property type="component" value="Chromosome"/>
</dbReference>
<dbReference type="GO" id="GO:0005737">
    <property type="term" value="C:cytoplasm"/>
    <property type="evidence" value="ECO:0007669"/>
    <property type="project" value="UniProtKB-SubCell"/>
</dbReference>
<dbReference type="GO" id="GO:0004816">
    <property type="term" value="F:asparagine-tRNA ligase activity"/>
    <property type="evidence" value="ECO:0007669"/>
    <property type="project" value="UniProtKB-UniRule"/>
</dbReference>
<dbReference type="GO" id="GO:0005524">
    <property type="term" value="F:ATP binding"/>
    <property type="evidence" value="ECO:0007669"/>
    <property type="project" value="UniProtKB-UniRule"/>
</dbReference>
<dbReference type="GO" id="GO:0003676">
    <property type="term" value="F:nucleic acid binding"/>
    <property type="evidence" value="ECO:0007669"/>
    <property type="project" value="InterPro"/>
</dbReference>
<dbReference type="GO" id="GO:0006421">
    <property type="term" value="P:asparaginyl-tRNA aminoacylation"/>
    <property type="evidence" value="ECO:0007669"/>
    <property type="project" value="UniProtKB-UniRule"/>
</dbReference>
<dbReference type="CDD" id="cd00776">
    <property type="entry name" value="AsxRS_core"/>
    <property type="match status" value="1"/>
</dbReference>
<dbReference type="CDD" id="cd04318">
    <property type="entry name" value="EcAsnRS_like_N"/>
    <property type="match status" value="1"/>
</dbReference>
<dbReference type="FunFam" id="3.30.930.10:FF:000016">
    <property type="entry name" value="Asparagine--tRNA ligase"/>
    <property type="match status" value="1"/>
</dbReference>
<dbReference type="Gene3D" id="3.30.930.10">
    <property type="entry name" value="Bira Bifunctional Protein, Domain 2"/>
    <property type="match status" value="1"/>
</dbReference>
<dbReference type="Gene3D" id="2.40.50.140">
    <property type="entry name" value="Nucleic acid-binding proteins"/>
    <property type="match status" value="1"/>
</dbReference>
<dbReference type="HAMAP" id="MF_00534">
    <property type="entry name" value="Asn_tRNA_synth"/>
    <property type="match status" value="1"/>
</dbReference>
<dbReference type="InterPro" id="IPR004364">
    <property type="entry name" value="Aa-tRNA-synt_II"/>
</dbReference>
<dbReference type="InterPro" id="IPR006195">
    <property type="entry name" value="aa-tRNA-synth_II"/>
</dbReference>
<dbReference type="InterPro" id="IPR045864">
    <property type="entry name" value="aa-tRNA-synth_II/BPL/LPL"/>
</dbReference>
<dbReference type="InterPro" id="IPR004522">
    <property type="entry name" value="Asn-tRNA-ligase"/>
</dbReference>
<dbReference type="InterPro" id="IPR002312">
    <property type="entry name" value="Asp/Asn-tRNA-synth_IIb"/>
</dbReference>
<dbReference type="InterPro" id="IPR012340">
    <property type="entry name" value="NA-bd_OB-fold"/>
</dbReference>
<dbReference type="InterPro" id="IPR004365">
    <property type="entry name" value="NA-bd_OB_tRNA"/>
</dbReference>
<dbReference type="NCBIfam" id="TIGR00457">
    <property type="entry name" value="asnS"/>
    <property type="match status" value="1"/>
</dbReference>
<dbReference type="NCBIfam" id="NF003037">
    <property type="entry name" value="PRK03932.1"/>
    <property type="match status" value="1"/>
</dbReference>
<dbReference type="PANTHER" id="PTHR22594:SF34">
    <property type="entry name" value="ASPARAGINE--TRNA LIGASE, MITOCHONDRIAL-RELATED"/>
    <property type="match status" value="1"/>
</dbReference>
<dbReference type="PANTHER" id="PTHR22594">
    <property type="entry name" value="ASPARTYL/LYSYL-TRNA SYNTHETASE"/>
    <property type="match status" value="1"/>
</dbReference>
<dbReference type="Pfam" id="PF00152">
    <property type="entry name" value="tRNA-synt_2"/>
    <property type="match status" value="1"/>
</dbReference>
<dbReference type="Pfam" id="PF01336">
    <property type="entry name" value="tRNA_anti-codon"/>
    <property type="match status" value="1"/>
</dbReference>
<dbReference type="PRINTS" id="PR01042">
    <property type="entry name" value="TRNASYNTHASP"/>
</dbReference>
<dbReference type="SUPFAM" id="SSF55681">
    <property type="entry name" value="Class II aaRS and biotin synthetases"/>
    <property type="match status" value="1"/>
</dbReference>
<dbReference type="SUPFAM" id="SSF50249">
    <property type="entry name" value="Nucleic acid-binding proteins"/>
    <property type="match status" value="1"/>
</dbReference>
<dbReference type="PROSITE" id="PS50862">
    <property type="entry name" value="AA_TRNA_LIGASE_II"/>
    <property type="match status" value="1"/>
</dbReference>